<gene>
    <name type="primary">rplX</name>
    <name type="ordered locus">BSU01270</name>
</gene>
<proteinExistence type="evidence at protein level"/>
<reference key="1">
    <citation type="journal article" date="1989" name="Nucleic Acids Res.">
        <title>Cloning and analysis of the spc ribosomal protein operon of Bacillus subtilis: comparison with the spc operon of Escherichia coli.</title>
        <authorList>
            <person name="Henkin T.M."/>
            <person name="Moon S.H."/>
            <person name="Mattheakis L.C."/>
            <person name="Nomura M."/>
        </authorList>
    </citation>
    <scope>NUCLEOTIDE SEQUENCE [GENOMIC DNA]</scope>
    <source>
        <strain>168</strain>
    </source>
</reference>
<reference key="2">
    <citation type="journal article" date="1992" name="J. Gen. Microbiol.">
        <title>DNA sequence variability at the rplX locus of Bacillus subtilis.</title>
        <authorList>
            <person name="Sharp P.M."/>
            <person name="Nolan N.C."/>
            <person name="Ni Cholmain N."/>
            <person name="Devine K.M."/>
        </authorList>
    </citation>
    <scope>NUCLEOTIDE SEQUENCE [GENOMIC DNA]</scope>
    <source>
        <strain>168 / JH642</strain>
    </source>
</reference>
<reference key="3">
    <citation type="journal article" date="1996" name="Gene">
        <title>Genetic and transcriptional organization of the Bacillus subtilis spc-alpha region.</title>
        <authorList>
            <person name="Suh J.-W."/>
            <person name="Boylan S.A."/>
            <person name="Oh S.H."/>
            <person name="Price C.W."/>
        </authorList>
    </citation>
    <scope>NUCLEOTIDE SEQUENCE [GENOMIC DNA]</scope>
    <source>
        <strain>168 / Marburg / ATCC 6051 / DSM 10 / JCM 1465 / NBRC 13719 / NCIMB 3610 / NRRL NRS-744 / VKM B-501</strain>
    </source>
</reference>
<reference key="4">
    <citation type="journal article" date="1997" name="Nature">
        <title>The complete genome sequence of the Gram-positive bacterium Bacillus subtilis.</title>
        <authorList>
            <person name="Kunst F."/>
            <person name="Ogasawara N."/>
            <person name="Moszer I."/>
            <person name="Albertini A.M."/>
            <person name="Alloni G."/>
            <person name="Azevedo V."/>
            <person name="Bertero M.G."/>
            <person name="Bessieres P."/>
            <person name="Bolotin A."/>
            <person name="Borchert S."/>
            <person name="Borriss R."/>
            <person name="Boursier L."/>
            <person name="Brans A."/>
            <person name="Braun M."/>
            <person name="Brignell S.C."/>
            <person name="Bron S."/>
            <person name="Brouillet S."/>
            <person name="Bruschi C.V."/>
            <person name="Caldwell B."/>
            <person name="Capuano V."/>
            <person name="Carter N.M."/>
            <person name="Choi S.-K."/>
            <person name="Codani J.-J."/>
            <person name="Connerton I.F."/>
            <person name="Cummings N.J."/>
            <person name="Daniel R.A."/>
            <person name="Denizot F."/>
            <person name="Devine K.M."/>
            <person name="Duesterhoeft A."/>
            <person name="Ehrlich S.D."/>
            <person name="Emmerson P.T."/>
            <person name="Entian K.-D."/>
            <person name="Errington J."/>
            <person name="Fabret C."/>
            <person name="Ferrari E."/>
            <person name="Foulger D."/>
            <person name="Fritz C."/>
            <person name="Fujita M."/>
            <person name="Fujita Y."/>
            <person name="Fuma S."/>
            <person name="Galizzi A."/>
            <person name="Galleron N."/>
            <person name="Ghim S.-Y."/>
            <person name="Glaser P."/>
            <person name="Goffeau A."/>
            <person name="Golightly E.J."/>
            <person name="Grandi G."/>
            <person name="Guiseppi G."/>
            <person name="Guy B.J."/>
            <person name="Haga K."/>
            <person name="Haiech J."/>
            <person name="Harwood C.R."/>
            <person name="Henaut A."/>
            <person name="Hilbert H."/>
            <person name="Holsappel S."/>
            <person name="Hosono S."/>
            <person name="Hullo M.-F."/>
            <person name="Itaya M."/>
            <person name="Jones L.-M."/>
            <person name="Joris B."/>
            <person name="Karamata D."/>
            <person name="Kasahara Y."/>
            <person name="Klaerr-Blanchard M."/>
            <person name="Klein C."/>
            <person name="Kobayashi Y."/>
            <person name="Koetter P."/>
            <person name="Koningstein G."/>
            <person name="Krogh S."/>
            <person name="Kumano M."/>
            <person name="Kurita K."/>
            <person name="Lapidus A."/>
            <person name="Lardinois S."/>
            <person name="Lauber J."/>
            <person name="Lazarevic V."/>
            <person name="Lee S.-M."/>
            <person name="Levine A."/>
            <person name="Liu H."/>
            <person name="Masuda S."/>
            <person name="Mauel C."/>
            <person name="Medigue C."/>
            <person name="Medina N."/>
            <person name="Mellado R.P."/>
            <person name="Mizuno M."/>
            <person name="Moestl D."/>
            <person name="Nakai S."/>
            <person name="Noback M."/>
            <person name="Noone D."/>
            <person name="O'Reilly M."/>
            <person name="Ogawa K."/>
            <person name="Ogiwara A."/>
            <person name="Oudega B."/>
            <person name="Park S.-H."/>
            <person name="Parro V."/>
            <person name="Pohl T.M."/>
            <person name="Portetelle D."/>
            <person name="Porwollik S."/>
            <person name="Prescott A.M."/>
            <person name="Presecan E."/>
            <person name="Pujic P."/>
            <person name="Purnelle B."/>
            <person name="Rapoport G."/>
            <person name="Rey M."/>
            <person name="Reynolds S."/>
            <person name="Rieger M."/>
            <person name="Rivolta C."/>
            <person name="Rocha E."/>
            <person name="Roche B."/>
            <person name="Rose M."/>
            <person name="Sadaie Y."/>
            <person name="Sato T."/>
            <person name="Scanlan E."/>
            <person name="Schleich S."/>
            <person name="Schroeter R."/>
            <person name="Scoffone F."/>
            <person name="Sekiguchi J."/>
            <person name="Sekowska A."/>
            <person name="Seror S.J."/>
            <person name="Serror P."/>
            <person name="Shin B.-S."/>
            <person name="Soldo B."/>
            <person name="Sorokin A."/>
            <person name="Tacconi E."/>
            <person name="Takagi T."/>
            <person name="Takahashi H."/>
            <person name="Takemaru K."/>
            <person name="Takeuchi M."/>
            <person name="Tamakoshi A."/>
            <person name="Tanaka T."/>
            <person name="Terpstra P."/>
            <person name="Tognoni A."/>
            <person name="Tosato V."/>
            <person name="Uchiyama S."/>
            <person name="Vandenbol M."/>
            <person name="Vannier F."/>
            <person name="Vassarotti A."/>
            <person name="Viari A."/>
            <person name="Wambutt R."/>
            <person name="Wedler E."/>
            <person name="Wedler H."/>
            <person name="Weitzenegger T."/>
            <person name="Winters P."/>
            <person name="Wipat A."/>
            <person name="Yamamoto H."/>
            <person name="Yamane K."/>
            <person name="Yasumoto K."/>
            <person name="Yata K."/>
            <person name="Yoshida K."/>
            <person name="Yoshikawa H.-F."/>
            <person name="Zumstein E."/>
            <person name="Yoshikawa H."/>
            <person name="Danchin A."/>
        </authorList>
    </citation>
    <scope>NUCLEOTIDE SEQUENCE [LARGE SCALE GENOMIC DNA]</scope>
    <source>
        <strain>168</strain>
    </source>
</reference>
<reference key="5">
    <citation type="journal article" date="1994" name="J. Bacteriol.">
        <title>The Bacillus subtilis nucleoid-associated protein HPB12 strongly compacts DNA.</title>
        <authorList>
            <person name="Arnold-Schulz-Gahmen B."/>
            <person name="Salti-Montesanto V."/>
            <person name="Nguyen J."/>
            <person name="Hirschbein L."/>
            <person name="le Hegarat F."/>
        </authorList>
    </citation>
    <scope>PROTEIN SEQUENCE OF 3-29</scope>
    <scope>CHARACTERIZATION OF DNA-BINDING ABILITIES</scope>
    <source>
        <strain>168</strain>
    </source>
</reference>
<reference key="6">
    <citation type="journal article" date="2001" name="Biochimie">
        <title>A possible role for L24 of Bacillus subtilis in nucleoid organization and segregation.</title>
        <authorList>
            <person name="Exley R."/>
            <person name="Zouine M."/>
            <person name="Pernelle J.-J."/>
            <person name="Beloin C."/>
            <person name="le Hegarat F."/>
            <person name="Deneubourg A.M."/>
        </authorList>
    </citation>
    <scope>SUBCELLULAR LOCATION DURING THE CELL CYCLE</scope>
    <scope>POSSIBLE ROLE IN NUCLEOID ORGANIZATION/SEGREGATION</scope>
</reference>
<reference evidence="5 6" key="7">
    <citation type="journal article" date="2018" name="Proc. Natl. Acad. Sci. U.S.A.">
        <title>Structural basis for antibiotic resistance mediated by the Bacillus subtilis ABCF ATPase VmlR.</title>
        <authorList>
            <person name="Crowe-McAuliffe C."/>
            <person name="Graf M."/>
            <person name="Huter P."/>
            <person name="Takada H."/>
            <person name="Abdelshahid M."/>
            <person name="Novacek J."/>
            <person name="Murina V."/>
            <person name="Atkinson G.C."/>
            <person name="Hauryliuk V."/>
            <person name="Wilson D.N."/>
        </authorList>
    </citation>
    <scope>STRUCTURE BY ELECTRON MICROSCOPY (3.10 ANGSTROMS) OF 1-103 WITH AND WITHOUT VIRGINIAMYCIN M</scope>
    <scope>SUBUNIT</scope>
</reference>
<feature type="chain" id="PRO_0000130623" description="Large ribosomal subunit protein uL24">
    <location>
        <begin position="1"/>
        <end position="103"/>
    </location>
</feature>
<feature type="sequence conflict" description="In Ref. 5; AA sequence." evidence="4" ref="5">
    <original>Q</original>
    <variation>E</variation>
    <location>
        <position position="20"/>
    </location>
</feature>
<feature type="strand" evidence="7">
    <location>
        <begin position="5"/>
        <end position="7"/>
    </location>
</feature>
<feature type="strand" evidence="8">
    <location>
        <begin position="8"/>
        <end position="11"/>
    </location>
</feature>
<feature type="turn" evidence="8">
    <location>
        <begin position="15"/>
        <end position="18"/>
    </location>
</feature>
<feature type="strand" evidence="8">
    <location>
        <begin position="20"/>
        <end position="27"/>
    </location>
</feature>
<feature type="turn" evidence="8">
    <location>
        <begin position="28"/>
        <end position="31"/>
    </location>
</feature>
<feature type="strand" evidence="8">
    <location>
        <begin position="32"/>
        <end position="35"/>
    </location>
</feature>
<feature type="strand" evidence="8">
    <location>
        <begin position="38"/>
        <end position="45"/>
    </location>
</feature>
<feature type="strand" evidence="8">
    <location>
        <begin position="49"/>
        <end position="53"/>
    </location>
</feature>
<feature type="strand" evidence="8">
    <location>
        <begin position="55"/>
        <end position="60"/>
    </location>
</feature>
<feature type="helix" evidence="8">
    <location>
        <begin position="65"/>
        <end position="67"/>
    </location>
</feature>
<feature type="strand" evidence="8">
    <location>
        <begin position="68"/>
        <end position="71"/>
    </location>
</feature>
<feature type="turn" evidence="8">
    <location>
        <begin position="73"/>
        <end position="75"/>
    </location>
</feature>
<feature type="strand" evidence="8">
    <location>
        <begin position="81"/>
        <end position="86"/>
    </location>
</feature>
<feature type="strand" evidence="8">
    <location>
        <begin position="89"/>
        <end position="94"/>
    </location>
</feature>
<feature type="turn" evidence="8">
    <location>
        <begin position="95"/>
        <end position="97"/>
    </location>
</feature>
<dbReference type="EMBL" id="X15664">
    <property type="protein sequence ID" value="CAA33702.1"/>
    <property type="molecule type" value="Genomic_DNA"/>
</dbReference>
<dbReference type="EMBL" id="M81748">
    <property type="protein sequence ID" value="AAB59023.1"/>
    <property type="molecule type" value="Genomic_DNA"/>
</dbReference>
<dbReference type="EMBL" id="L47971">
    <property type="protein sequence ID" value="AAB06810.1"/>
    <property type="molecule type" value="Genomic_DNA"/>
</dbReference>
<dbReference type="EMBL" id="AL009126">
    <property type="protein sequence ID" value="CAB11903.1"/>
    <property type="molecule type" value="Genomic_DNA"/>
</dbReference>
<dbReference type="PIR" id="S05993">
    <property type="entry name" value="R5BS2B"/>
</dbReference>
<dbReference type="RefSeq" id="NP_388008.1">
    <property type="nucleotide sequence ID" value="NC_000964.3"/>
</dbReference>
<dbReference type="RefSeq" id="WP_003156486.1">
    <property type="nucleotide sequence ID" value="NZ_OZ025638.1"/>
</dbReference>
<dbReference type="PDB" id="3J3V">
    <property type="method" value="EM"/>
    <property type="resolution" value="13.30 A"/>
    <property type="chains" value="U=1-103"/>
</dbReference>
<dbReference type="PDB" id="3J3W">
    <property type="method" value="EM"/>
    <property type="resolution" value="10.70 A"/>
    <property type="chains" value="U=1-103"/>
</dbReference>
<dbReference type="PDB" id="3J9W">
    <property type="method" value="EM"/>
    <property type="resolution" value="3.90 A"/>
    <property type="chains" value="BX=1-103"/>
</dbReference>
<dbReference type="PDB" id="5NJT">
    <property type="method" value="EM"/>
    <property type="resolution" value="3.80 A"/>
    <property type="chains" value="n=2-101"/>
</dbReference>
<dbReference type="PDB" id="6HA1">
    <property type="method" value="EM"/>
    <property type="resolution" value="3.10 A"/>
    <property type="chains" value="U=1-103"/>
</dbReference>
<dbReference type="PDB" id="6HA8">
    <property type="method" value="EM"/>
    <property type="resolution" value="3.50 A"/>
    <property type="chains" value="U=1-103"/>
</dbReference>
<dbReference type="PDB" id="6HTQ">
    <property type="method" value="EM"/>
    <property type="resolution" value="4.50 A"/>
    <property type="chains" value="U=1-101"/>
</dbReference>
<dbReference type="PDB" id="6PPF">
    <property type="method" value="EM"/>
    <property type="resolution" value="3.40 A"/>
    <property type="chains" value="U=1-103"/>
</dbReference>
<dbReference type="PDB" id="6PPK">
    <property type="method" value="EM"/>
    <property type="resolution" value="4.40 A"/>
    <property type="chains" value="U=1-103"/>
</dbReference>
<dbReference type="PDB" id="6PVK">
    <property type="method" value="EM"/>
    <property type="resolution" value="3.40 A"/>
    <property type="chains" value="U=1-103"/>
</dbReference>
<dbReference type="PDB" id="6TNN">
    <property type="method" value="EM"/>
    <property type="resolution" value="3.07 A"/>
    <property type="chains" value="n=1-103"/>
</dbReference>
<dbReference type="PDB" id="6TPQ">
    <property type="method" value="EM"/>
    <property type="resolution" value="3.07 A"/>
    <property type="chains" value="n=1-103"/>
</dbReference>
<dbReference type="PDB" id="7AQC">
    <property type="method" value="EM"/>
    <property type="resolution" value="2.99 A"/>
    <property type="chains" value="U=1-103"/>
</dbReference>
<dbReference type="PDB" id="7AQD">
    <property type="method" value="EM"/>
    <property type="resolution" value="3.10 A"/>
    <property type="chains" value="U=1-103"/>
</dbReference>
<dbReference type="PDB" id="7AS8">
    <property type="method" value="EM"/>
    <property type="resolution" value="2.90 A"/>
    <property type="chains" value="Y=1-103"/>
</dbReference>
<dbReference type="PDB" id="7AS9">
    <property type="method" value="EM"/>
    <property type="resolution" value="3.50 A"/>
    <property type="chains" value="Y=1-103"/>
</dbReference>
<dbReference type="PDB" id="7O5B">
    <property type="method" value="EM"/>
    <property type="resolution" value="3.33 A"/>
    <property type="chains" value="t=1-103"/>
</dbReference>
<dbReference type="PDB" id="7OPE">
    <property type="method" value="EM"/>
    <property type="resolution" value="3.20 A"/>
    <property type="chains" value="Y=1-103"/>
</dbReference>
<dbReference type="PDB" id="7QGU">
    <property type="method" value="EM"/>
    <property type="resolution" value="4.75 A"/>
    <property type="chains" value="U=1-103"/>
</dbReference>
<dbReference type="PDB" id="7QH4">
    <property type="method" value="EM"/>
    <property type="resolution" value="5.45 A"/>
    <property type="chains" value="U=1-103"/>
</dbReference>
<dbReference type="PDB" id="7QV1">
    <property type="method" value="EM"/>
    <property type="resolution" value="3.50 A"/>
    <property type="chains" value="U=1-103"/>
</dbReference>
<dbReference type="PDB" id="7QV2">
    <property type="method" value="EM"/>
    <property type="resolution" value="3.50 A"/>
    <property type="chains" value="U=1-103"/>
</dbReference>
<dbReference type="PDB" id="7QV3">
    <property type="method" value="EM"/>
    <property type="resolution" value="5.14 A"/>
    <property type="chains" value="U=1-103"/>
</dbReference>
<dbReference type="PDB" id="7S9U">
    <property type="method" value="EM"/>
    <property type="resolution" value="3.20 A"/>
    <property type="chains" value="U=1-103"/>
</dbReference>
<dbReference type="PDB" id="7SAE">
    <property type="method" value="EM"/>
    <property type="resolution" value="3.00 A"/>
    <property type="chains" value="U=1-103"/>
</dbReference>
<dbReference type="PDB" id="8BUU">
    <property type="method" value="EM"/>
    <property type="resolution" value="2.90 A"/>
    <property type="chains" value="U=1-103"/>
</dbReference>
<dbReference type="PDB" id="8QCQ">
    <property type="method" value="EM"/>
    <property type="resolution" value="2.30 A"/>
    <property type="chains" value="U=1-103"/>
</dbReference>
<dbReference type="PDB" id="8QPP">
    <property type="method" value="EM"/>
    <property type="resolution" value="3.40 A"/>
    <property type="chains" value="t=1-101"/>
</dbReference>
<dbReference type="PDB" id="8R55">
    <property type="method" value="EM"/>
    <property type="resolution" value="3.57 A"/>
    <property type="chains" value="t=1-101"/>
</dbReference>
<dbReference type="PDB" id="8S1P">
    <property type="method" value="EM"/>
    <property type="resolution" value="1.96 A"/>
    <property type="chains" value="U=1-103"/>
</dbReference>
<dbReference type="PDB" id="8S1U">
    <property type="method" value="EM"/>
    <property type="resolution" value="3.40 A"/>
    <property type="chains" value="U=1-103"/>
</dbReference>
<dbReference type="PDB" id="9BS0">
    <property type="method" value="EM"/>
    <property type="resolution" value="3.30 A"/>
    <property type="chains" value="P=1-103"/>
</dbReference>
<dbReference type="PDB" id="9BSL">
    <property type="method" value="EM"/>
    <property type="resolution" value="3.10 A"/>
    <property type="chains" value="P=1-103"/>
</dbReference>
<dbReference type="PDB" id="9BSS">
    <property type="method" value="EM"/>
    <property type="resolution" value="3.10 A"/>
    <property type="chains" value="P=1-103"/>
</dbReference>
<dbReference type="PDBsum" id="3J3V"/>
<dbReference type="PDBsum" id="3J3W"/>
<dbReference type="PDBsum" id="3J9W"/>
<dbReference type="PDBsum" id="5NJT"/>
<dbReference type="PDBsum" id="6HA1"/>
<dbReference type="PDBsum" id="6HA8"/>
<dbReference type="PDBsum" id="6HTQ"/>
<dbReference type="PDBsum" id="6PPF"/>
<dbReference type="PDBsum" id="6PPK"/>
<dbReference type="PDBsum" id="6PVK"/>
<dbReference type="PDBsum" id="6TNN"/>
<dbReference type="PDBsum" id="6TPQ"/>
<dbReference type="PDBsum" id="7AQC"/>
<dbReference type="PDBsum" id="7AQD"/>
<dbReference type="PDBsum" id="7AS8"/>
<dbReference type="PDBsum" id="7AS9"/>
<dbReference type="PDBsum" id="7O5B"/>
<dbReference type="PDBsum" id="7OPE"/>
<dbReference type="PDBsum" id="7QGU"/>
<dbReference type="PDBsum" id="7QH4"/>
<dbReference type="PDBsum" id="7QV1"/>
<dbReference type="PDBsum" id="7QV2"/>
<dbReference type="PDBsum" id="7QV3"/>
<dbReference type="PDBsum" id="7S9U"/>
<dbReference type="PDBsum" id="7SAE"/>
<dbReference type="PDBsum" id="8BUU"/>
<dbReference type="PDBsum" id="8QCQ"/>
<dbReference type="PDBsum" id="8QPP"/>
<dbReference type="PDBsum" id="8R55"/>
<dbReference type="PDBsum" id="8S1P"/>
<dbReference type="PDBsum" id="8S1U"/>
<dbReference type="PDBsum" id="9BS0"/>
<dbReference type="PDBsum" id="9BSL"/>
<dbReference type="PDBsum" id="9BSS"/>
<dbReference type="EMDB" id="EMD-0176"/>
<dbReference type="EMDB" id="EMD-0177"/>
<dbReference type="EMDB" id="EMD-0270"/>
<dbReference type="EMDB" id="EMD-10535"/>
<dbReference type="EMDB" id="EMD-10543"/>
<dbReference type="EMDB" id="EMD-11862"/>
<dbReference type="EMDB" id="EMD-11864"/>
<dbReference type="EMDB" id="EMD-11889"/>
<dbReference type="EMDB" id="EMD-11890"/>
<dbReference type="EMDB" id="EMD-12734"/>
<dbReference type="EMDB" id="EMD-13017"/>
<dbReference type="EMDB" id="EMD-14157"/>
<dbReference type="EMDB" id="EMD-14158"/>
<dbReference type="EMDB" id="EMD-14159"/>
<dbReference type="EMDB" id="EMD-16246"/>
<dbReference type="EMDB" id="EMD-18332"/>
<dbReference type="EMDB" id="EMD-19638"/>
<dbReference type="EMDB" id="EMD-19641"/>
<dbReference type="EMDB" id="EMD-3656"/>
<dbReference type="EMDB" id="EMD-44849"/>
<dbReference type="EMDB" id="EMD-44869"/>
<dbReference type="EMDB" id="EMD-44871"/>
<dbReference type="SMR" id="P0CI78"/>
<dbReference type="FunCoup" id="P0CI78">
    <property type="interactions" value="559"/>
</dbReference>
<dbReference type="IntAct" id="P0CI78">
    <property type="interactions" value="1"/>
</dbReference>
<dbReference type="STRING" id="224308.BSU01270"/>
<dbReference type="jPOST" id="P0CI78"/>
<dbReference type="PaxDb" id="224308-BSU01270"/>
<dbReference type="EnsemblBacteria" id="CAB11903">
    <property type="protein sequence ID" value="CAB11903"/>
    <property type="gene ID" value="BSU_01270"/>
</dbReference>
<dbReference type="GeneID" id="93079291"/>
<dbReference type="GeneID" id="936799"/>
<dbReference type="KEGG" id="bsu:BSU01270"/>
<dbReference type="PATRIC" id="fig|224308.179.peg.130"/>
<dbReference type="eggNOG" id="COG0198">
    <property type="taxonomic scope" value="Bacteria"/>
</dbReference>
<dbReference type="InParanoid" id="P0CI78"/>
<dbReference type="OrthoDB" id="9807419at2"/>
<dbReference type="PhylomeDB" id="P0CI78"/>
<dbReference type="EvolutionaryTrace" id="P0CI78"/>
<dbReference type="PRO" id="PR:P0CI78"/>
<dbReference type="Proteomes" id="UP000001570">
    <property type="component" value="Chromosome"/>
</dbReference>
<dbReference type="GO" id="GO:0022625">
    <property type="term" value="C:cytosolic large ribosomal subunit"/>
    <property type="evidence" value="ECO:0000318"/>
    <property type="project" value="GO_Central"/>
</dbReference>
<dbReference type="GO" id="GO:0009295">
    <property type="term" value="C:nucleoid"/>
    <property type="evidence" value="ECO:0007669"/>
    <property type="project" value="UniProtKB-SubCell"/>
</dbReference>
<dbReference type="GO" id="GO:0003677">
    <property type="term" value="F:DNA binding"/>
    <property type="evidence" value="ECO:0007669"/>
    <property type="project" value="UniProtKB-KW"/>
</dbReference>
<dbReference type="GO" id="GO:0019843">
    <property type="term" value="F:rRNA binding"/>
    <property type="evidence" value="ECO:0007669"/>
    <property type="project" value="UniProtKB-UniRule"/>
</dbReference>
<dbReference type="GO" id="GO:0003735">
    <property type="term" value="F:structural constituent of ribosome"/>
    <property type="evidence" value="ECO:0007669"/>
    <property type="project" value="InterPro"/>
</dbReference>
<dbReference type="GO" id="GO:0006412">
    <property type="term" value="P:translation"/>
    <property type="evidence" value="ECO:0000318"/>
    <property type="project" value="GO_Central"/>
</dbReference>
<dbReference type="CDD" id="cd06089">
    <property type="entry name" value="KOW_RPL26"/>
    <property type="match status" value="1"/>
</dbReference>
<dbReference type="FunFam" id="2.30.30.30:FF:000004">
    <property type="entry name" value="50S ribosomal protein L24"/>
    <property type="match status" value="1"/>
</dbReference>
<dbReference type="Gene3D" id="2.30.30.30">
    <property type="match status" value="1"/>
</dbReference>
<dbReference type="HAMAP" id="MF_01326_B">
    <property type="entry name" value="Ribosomal_uL24_B"/>
    <property type="match status" value="1"/>
</dbReference>
<dbReference type="InterPro" id="IPR005824">
    <property type="entry name" value="KOW"/>
</dbReference>
<dbReference type="InterPro" id="IPR014722">
    <property type="entry name" value="Rib_uL2_dom2"/>
</dbReference>
<dbReference type="InterPro" id="IPR003256">
    <property type="entry name" value="Ribosomal_uL24"/>
</dbReference>
<dbReference type="InterPro" id="IPR005825">
    <property type="entry name" value="Ribosomal_uL24_CS"/>
</dbReference>
<dbReference type="InterPro" id="IPR041988">
    <property type="entry name" value="Ribosomal_uL24_KOW"/>
</dbReference>
<dbReference type="InterPro" id="IPR008991">
    <property type="entry name" value="Translation_prot_SH3-like_sf"/>
</dbReference>
<dbReference type="NCBIfam" id="TIGR01079">
    <property type="entry name" value="rplX_bact"/>
    <property type="match status" value="1"/>
</dbReference>
<dbReference type="PANTHER" id="PTHR12903">
    <property type="entry name" value="MITOCHONDRIAL RIBOSOMAL PROTEIN L24"/>
    <property type="match status" value="1"/>
</dbReference>
<dbReference type="Pfam" id="PF00467">
    <property type="entry name" value="KOW"/>
    <property type="match status" value="1"/>
</dbReference>
<dbReference type="Pfam" id="PF17136">
    <property type="entry name" value="ribosomal_L24"/>
    <property type="match status" value="1"/>
</dbReference>
<dbReference type="SMART" id="SM00739">
    <property type="entry name" value="KOW"/>
    <property type="match status" value="1"/>
</dbReference>
<dbReference type="SUPFAM" id="SSF50104">
    <property type="entry name" value="Translation proteins SH3-like domain"/>
    <property type="match status" value="1"/>
</dbReference>
<dbReference type="PROSITE" id="PS01108">
    <property type="entry name" value="RIBOSOMAL_L24"/>
    <property type="match status" value="1"/>
</dbReference>
<sequence length="103" mass="11142">MHVKKGDKVMVISGKDKGKQGTILAAFPKKDRVLVEGVNMVKKHSKPTQANPQGGISNQEAPIHVSNVMPLDPKTGEVTRVGYKVEDGKKVRVAKKSGQVLDK</sequence>
<keyword id="KW-0002">3D-structure</keyword>
<keyword id="KW-0963">Cytoplasm</keyword>
<keyword id="KW-0903">Direct protein sequencing</keyword>
<keyword id="KW-0238">DNA-binding</keyword>
<keyword id="KW-1185">Reference proteome</keyword>
<keyword id="KW-0687">Ribonucleoprotein</keyword>
<keyword id="KW-0689">Ribosomal protein</keyword>
<keyword id="KW-0694">RNA-binding</keyword>
<keyword id="KW-0699">rRNA-binding</keyword>
<name>RL24_BACSU</name>
<accession>P0CI78</accession>
<accession>P12876</accession>
<comment type="function">
    <text evidence="1">One of two assembly initiator proteins, it binds directly to the 5'-end of the 23S rRNA, where it nucleates assembly of the 50S subunit.</text>
</comment>
<comment type="function">
    <text evidence="1">One of the proteins that surrounds the polypeptide exit tunnel on the outside of the subunit.</text>
</comment>
<comment type="function">
    <text>Has also been isolated as a basic, heat-shock stable DNA-binding protein from the B.subtilis nucleoid. It binds cooperatively to double-stranded supercoiled DNA which it further compacts into complexes 15-17 nm in diameter. Overexpression of the protein disrupts nucleoid segregation and positioning.</text>
</comment>
<comment type="subunit">
    <text evidence="3">Part of the 50S ribosomal subunit.</text>
</comment>
<comment type="subcellular location">
    <subcellularLocation>
        <location evidence="2">Cytoplasm</location>
    </subcellularLocation>
    <subcellularLocation>
        <location evidence="2">Cytoplasm</location>
        <location evidence="2">Nucleoid</location>
    </subcellularLocation>
    <text>Is located predominantly at the nucleoid poles during exponential phase, while in stationary phase the protein is more evenly distributed in the whole cell.</text>
</comment>
<comment type="similarity">
    <text evidence="4">Belongs to the universal ribosomal protein uL24 family.</text>
</comment>
<organism>
    <name type="scientific">Bacillus subtilis (strain 168)</name>
    <dbReference type="NCBI Taxonomy" id="224308"/>
    <lineage>
        <taxon>Bacteria</taxon>
        <taxon>Bacillati</taxon>
        <taxon>Bacillota</taxon>
        <taxon>Bacilli</taxon>
        <taxon>Bacillales</taxon>
        <taxon>Bacillaceae</taxon>
        <taxon>Bacillus</taxon>
    </lineage>
</organism>
<protein>
    <recommendedName>
        <fullName evidence="4">Large ribosomal subunit protein uL24</fullName>
    </recommendedName>
    <alternativeName>
        <fullName>12 kDa DNA-binding protein</fullName>
    </alternativeName>
    <alternativeName>
        <fullName>50S ribosomal protein L24</fullName>
    </alternativeName>
    <alternativeName>
        <fullName>BL23</fullName>
    </alternativeName>
    <alternativeName>
        <fullName>HPB12</fullName>
    </alternativeName>
</protein>
<evidence type="ECO:0000250" key="1"/>
<evidence type="ECO:0000269" key="2">
    <source>
    </source>
</evidence>
<evidence type="ECO:0000269" key="3">
    <source>
    </source>
</evidence>
<evidence type="ECO:0000305" key="4"/>
<evidence type="ECO:0007744" key="5">
    <source>
        <dbReference type="PDB" id="6HA1"/>
    </source>
</evidence>
<evidence type="ECO:0007744" key="6">
    <source>
        <dbReference type="PDB" id="6HA8"/>
    </source>
</evidence>
<evidence type="ECO:0007829" key="7">
    <source>
        <dbReference type="PDB" id="6PVK"/>
    </source>
</evidence>
<evidence type="ECO:0007829" key="8">
    <source>
        <dbReference type="PDB" id="8S1P"/>
    </source>
</evidence>